<sequence>MTKYIIVTGGVLSSVGKGTIVASIGFLLKSSGYNVTAIKVDPYLNVDAGTMNPYMHGEVFVTDDGAETDLDLGHYERFIGINTTRYNNITAGRVYFEVIRKEREGKYLGQTVQIIPHVTDEIKGLVKKAVDDTNAEIAIIEIGGTVGDIEGLPFLEAVRQMKLEEEENLMFIHVALVEYLRVTGELKTKPLQHSVQELRRIGIQPDMIIARSILPLDEETKKKIALFTNVKPDYILSNYDVELTYEVPLILEKQNITKKIFNKLGLEPKEPKVAEWLEFVENMKNPSKEVKIALVGKYTKLKDSYLSIKEAIYHAAAKLRVKPTLVWVESSDLEKSEDEINKLKDVNGIIVLPGFGARGVEGKIQAIKFARENNIPFLGICFGMQLAIVEYARNVLGLKEANTTEVNPNTKYPIITLLDNQKKIVQVGGTMRLGAQKIILKEGTLAYSIYNSPHIYERHRHRYEVNPEYVDLLQKYGMIISGVSENGLVEIIELKNHKFFLGTQAHPEYKSRPLSPSPVFLNFLSVASA</sequence>
<feature type="chain" id="PRO_0000138269" description="CTP synthase">
    <location>
        <begin position="1"/>
        <end position="529"/>
    </location>
</feature>
<feature type="domain" description="Glutamine amidotransferase type-1" evidence="1">
    <location>
        <begin position="291"/>
        <end position="529"/>
    </location>
</feature>
<feature type="region of interest" description="Amidoligase domain" evidence="1">
    <location>
        <begin position="1"/>
        <end position="266"/>
    </location>
</feature>
<feature type="active site" description="Nucleophile; for glutamine hydrolysis" evidence="1">
    <location>
        <position position="381"/>
    </location>
</feature>
<feature type="active site" evidence="1">
    <location>
        <position position="506"/>
    </location>
</feature>
<feature type="active site" evidence="1">
    <location>
        <position position="508"/>
    </location>
</feature>
<feature type="binding site" evidence="1">
    <location>
        <position position="13"/>
    </location>
    <ligand>
        <name>CTP</name>
        <dbReference type="ChEBI" id="CHEBI:37563"/>
        <note>allosteric inhibitor</note>
    </ligand>
</feature>
<feature type="binding site" evidence="1">
    <location>
        <position position="13"/>
    </location>
    <ligand>
        <name>UTP</name>
        <dbReference type="ChEBI" id="CHEBI:46398"/>
    </ligand>
</feature>
<feature type="binding site" evidence="1">
    <location>
        <begin position="14"/>
        <end position="19"/>
    </location>
    <ligand>
        <name>ATP</name>
        <dbReference type="ChEBI" id="CHEBI:30616"/>
    </ligand>
</feature>
<feature type="binding site" evidence="1">
    <location>
        <position position="54"/>
    </location>
    <ligand>
        <name>L-glutamine</name>
        <dbReference type="ChEBI" id="CHEBI:58359"/>
    </ligand>
</feature>
<feature type="binding site" evidence="1">
    <location>
        <position position="71"/>
    </location>
    <ligand>
        <name>ATP</name>
        <dbReference type="ChEBI" id="CHEBI:30616"/>
    </ligand>
</feature>
<feature type="binding site" evidence="1">
    <location>
        <position position="71"/>
    </location>
    <ligand>
        <name>Mg(2+)</name>
        <dbReference type="ChEBI" id="CHEBI:18420"/>
    </ligand>
</feature>
<feature type="binding site" evidence="1">
    <location>
        <position position="141"/>
    </location>
    <ligand>
        <name>Mg(2+)</name>
        <dbReference type="ChEBI" id="CHEBI:18420"/>
    </ligand>
</feature>
<feature type="binding site" evidence="1">
    <location>
        <begin position="148"/>
        <end position="150"/>
    </location>
    <ligand>
        <name>CTP</name>
        <dbReference type="ChEBI" id="CHEBI:37563"/>
        <note>allosteric inhibitor</note>
    </ligand>
</feature>
<feature type="binding site" evidence="1">
    <location>
        <begin position="187"/>
        <end position="192"/>
    </location>
    <ligand>
        <name>CTP</name>
        <dbReference type="ChEBI" id="CHEBI:37563"/>
        <note>allosteric inhibitor</note>
    </ligand>
</feature>
<feature type="binding site" evidence="1">
    <location>
        <begin position="187"/>
        <end position="192"/>
    </location>
    <ligand>
        <name>UTP</name>
        <dbReference type="ChEBI" id="CHEBI:46398"/>
    </ligand>
</feature>
<feature type="binding site" evidence="1">
    <location>
        <position position="223"/>
    </location>
    <ligand>
        <name>CTP</name>
        <dbReference type="ChEBI" id="CHEBI:37563"/>
        <note>allosteric inhibitor</note>
    </ligand>
</feature>
<feature type="binding site" evidence="1">
    <location>
        <position position="223"/>
    </location>
    <ligand>
        <name>UTP</name>
        <dbReference type="ChEBI" id="CHEBI:46398"/>
    </ligand>
</feature>
<feature type="binding site" evidence="1">
    <location>
        <position position="354"/>
    </location>
    <ligand>
        <name>L-glutamine</name>
        <dbReference type="ChEBI" id="CHEBI:58359"/>
    </ligand>
</feature>
<feature type="binding site" evidence="1">
    <location>
        <begin position="382"/>
        <end position="385"/>
    </location>
    <ligand>
        <name>L-glutamine</name>
        <dbReference type="ChEBI" id="CHEBI:58359"/>
    </ligand>
</feature>
<feature type="binding site" evidence="1">
    <location>
        <position position="405"/>
    </location>
    <ligand>
        <name>L-glutamine</name>
        <dbReference type="ChEBI" id="CHEBI:58359"/>
    </ligand>
</feature>
<feature type="binding site" evidence="1">
    <location>
        <position position="462"/>
    </location>
    <ligand>
        <name>L-glutamine</name>
        <dbReference type="ChEBI" id="CHEBI:58359"/>
    </ligand>
</feature>
<name>PYRG_SULAC</name>
<keyword id="KW-0067">ATP-binding</keyword>
<keyword id="KW-0315">Glutamine amidotransferase</keyword>
<keyword id="KW-0436">Ligase</keyword>
<keyword id="KW-0460">Magnesium</keyword>
<keyword id="KW-0479">Metal-binding</keyword>
<keyword id="KW-0547">Nucleotide-binding</keyword>
<keyword id="KW-0665">Pyrimidine biosynthesis</keyword>
<keyword id="KW-1185">Reference proteome</keyword>
<organism>
    <name type="scientific">Sulfolobus acidocaldarius (strain ATCC 33909 / DSM 639 / JCM 8929 / NBRC 15157 / NCIMB 11770)</name>
    <dbReference type="NCBI Taxonomy" id="330779"/>
    <lineage>
        <taxon>Archaea</taxon>
        <taxon>Thermoproteota</taxon>
        <taxon>Thermoprotei</taxon>
        <taxon>Sulfolobales</taxon>
        <taxon>Sulfolobaceae</taxon>
        <taxon>Sulfolobus</taxon>
    </lineage>
</organism>
<protein>
    <recommendedName>
        <fullName evidence="1">CTP synthase</fullName>
        <ecNumber evidence="1">6.3.4.2</ecNumber>
    </recommendedName>
    <alternativeName>
        <fullName evidence="1">Cytidine 5'-triphosphate synthase</fullName>
    </alternativeName>
    <alternativeName>
        <fullName evidence="1">Cytidine triphosphate synthetase</fullName>
        <shortName evidence="1">CTP synthetase</shortName>
        <shortName evidence="1">CTPS</shortName>
    </alternativeName>
    <alternativeName>
        <fullName evidence="1">UTP--ammonia ligase</fullName>
    </alternativeName>
</protein>
<evidence type="ECO:0000255" key="1">
    <source>
        <dbReference type="HAMAP-Rule" id="MF_01227"/>
    </source>
</evidence>
<reference key="1">
    <citation type="journal article" date="2005" name="J. Bacteriol.">
        <title>The genome of Sulfolobus acidocaldarius, a model organism of the Crenarchaeota.</title>
        <authorList>
            <person name="Chen L."/>
            <person name="Bruegger K."/>
            <person name="Skovgaard M."/>
            <person name="Redder P."/>
            <person name="She Q."/>
            <person name="Torarinsson E."/>
            <person name="Greve B."/>
            <person name="Awayez M."/>
            <person name="Zibat A."/>
            <person name="Klenk H.-P."/>
            <person name="Garrett R.A."/>
        </authorList>
    </citation>
    <scope>NUCLEOTIDE SEQUENCE [LARGE SCALE GENOMIC DNA]</scope>
    <source>
        <strain>ATCC 33909 / DSM 639 / JCM 8929 / NBRC 15157 / NCIMB 11770</strain>
    </source>
</reference>
<gene>
    <name evidence="1" type="primary">pyrG</name>
    <name type="ordered locus">Saci_0801</name>
</gene>
<dbReference type="EC" id="6.3.4.2" evidence="1"/>
<dbReference type="EMBL" id="CP000077">
    <property type="protein sequence ID" value="AAY80171.1"/>
    <property type="molecule type" value="Genomic_DNA"/>
</dbReference>
<dbReference type="RefSeq" id="WP_011277673.1">
    <property type="nucleotide sequence ID" value="NC_007181.1"/>
</dbReference>
<dbReference type="SMR" id="Q4JAK8"/>
<dbReference type="STRING" id="330779.Saci_0801"/>
<dbReference type="GeneID" id="14551315"/>
<dbReference type="KEGG" id="sai:Saci_0801"/>
<dbReference type="PATRIC" id="fig|330779.12.peg.767"/>
<dbReference type="eggNOG" id="arCOG00063">
    <property type="taxonomic scope" value="Archaea"/>
</dbReference>
<dbReference type="HOGENOM" id="CLU_011675_5_0_2"/>
<dbReference type="UniPathway" id="UPA00159">
    <property type="reaction ID" value="UER00277"/>
</dbReference>
<dbReference type="Proteomes" id="UP000001018">
    <property type="component" value="Chromosome"/>
</dbReference>
<dbReference type="GO" id="GO:0005524">
    <property type="term" value="F:ATP binding"/>
    <property type="evidence" value="ECO:0007669"/>
    <property type="project" value="UniProtKB-KW"/>
</dbReference>
<dbReference type="GO" id="GO:0003883">
    <property type="term" value="F:CTP synthase activity"/>
    <property type="evidence" value="ECO:0007669"/>
    <property type="project" value="UniProtKB-UniRule"/>
</dbReference>
<dbReference type="GO" id="GO:0004359">
    <property type="term" value="F:glutaminase activity"/>
    <property type="evidence" value="ECO:0007669"/>
    <property type="project" value="RHEA"/>
</dbReference>
<dbReference type="GO" id="GO:0042802">
    <property type="term" value="F:identical protein binding"/>
    <property type="evidence" value="ECO:0007669"/>
    <property type="project" value="TreeGrafter"/>
</dbReference>
<dbReference type="GO" id="GO:0046872">
    <property type="term" value="F:metal ion binding"/>
    <property type="evidence" value="ECO:0007669"/>
    <property type="project" value="UniProtKB-KW"/>
</dbReference>
<dbReference type="GO" id="GO:0044210">
    <property type="term" value="P:'de novo' CTP biosynthetic process"/>
    <property type="evidence" value="ECO:0007669"/>
    <property type="project" value="UniProtKB-UniRule"/>
</dbReference>
<dbReference type="GO" id="GO:0019856">
    <property type="term" value="P:pyrimidine nucleobase biosynthetic process"/>
    <property type="evidence" value="ECO:0007669"/>
    <property type="project" value="TreeGrafter"/>
</dbReference>
<dbReference type="CDD" id="cd03113">
    <property type="entry name" value="CTPS_N"/>
    <property type="match status" value="1"/>
</dbReference>
<dbReference type="CDD" id="cd01746">
    <property type="entry name" value="GATase1_CTP_Synthase"/>
    <property type="match status" value="1"/>
</dbReference>
<dbReference type="FunFam" id="3.40.50.300:FF:000009">
    <property type="entry name" value="CTP synthase"/>
    <property type="match status" value="1"/>
</dbReference>
<dbReference type="FunFam" id="3.40.50.880:FF:000002">
    <property type="entry name" value="CTP synthase"/>
    <property type="match status" value="1"/>
</dbReference>
<dbReference type="Gene3D" id="3.40.50.880">
    <property type="match status" value="1"/>
</dbReference>
<dbReference type="Gene3D" id="3.40.50.300">
    <property type="entry name" value="P-loop containing nucleotide triphosphate hydrolases"/>
    <property type="match status" value="1"/>
</dbReference>
<dbReference type="HAMAP" id="MF_01227">
    <property type="entry name" value="PyrG"/>
    <property type="match status" value="1"/>
</dbReference>
<dbReference type="InterPro" id="IPR029062">
    <property type="entry name" value="Class_I_gatase-like"/>
</dbReference>
<dbReference type="InterPro" id="IPR004468">
    <property type="entry name" value="CTP_synthase"/>
</dbReference>
<dbReference type="InterPro" id="IPR017456">
    <property type="entry name" value="CTP_synthase_N"/>
</dbReference>
<dbReference type="InterPro" id="IPR017926">
    <property type="entry name" value="GATASE"/>
</dbReference>
<dbReference type="InterPro" id="IPR033828">
    <property type="entry name" value="GATase1_CTP_Synthase"/>
</dbReference>
<dbReference type="InterPro" id="IPR027417">
    <property type="entry name" value="P-loop_NTPase"/>
</dbReference>
<dbReference type="NCBIfam" id="NF003792">
    <property type="entry name" value="PRK05380.1"/>
    <property type="match status" value="1"/>
</dbReference>
<dbReference type="NCBIfam" id="TIGR00337">
    <property type="entry name" value="PyrG"/>
    <property type="match status" value="1"/>
</dbReference>
<dbReference type="PANTHER" id="PTHR11550">
    <property type="entry name" value="CTP SYNTHASE"/>
    <property type="match status" value="1"/>
</dbReference>
<dbReference type="PANTHER" id="PTHR11550:SF0">
    <property type="entry name" value="CTP SYNTHASE-RELATED"/>
    <property type="match status" value="1"/>
</dbReference>
<dbReference type="Pfam" id="PF06418">
    <property type="entry name" value="CTP_synth_N"/>
    <property type="match status" value="1"/>
</dbReference>
<dbReference type="Pfam" id="PF00117">
    <property type="entry name" value="GATase"/>
    <property type="match status" value="1"/>
</dbReference>
<dbReference type="SUPFAM" id="SSF52317">
    <property type="entry name" value="Class I glutamine amidotransferase-like"/>
    <property type="match status" value="1"/>
</dbReference>
<dbReference type="SUPFAM" id="SSF52540">
    <property type="entry name" value="P-loop containing nucleoside triphosphate hydrolases"/>
    <property type="match status" value="1"/>
</dbReference>
<dbReference type="PROSITE" id="PS51273">
    <property type="entry name" value="GATASE_TYPE_1"/>
    <property type="match status" value="1"/>
</dbReference>
<accession>Q4JAK8</accession>
<proteinExistence type="inferred from homology"/>
<comment type="function">
    <text evidence="1">Catalyzes the ATP-dependent amination of UTP to CTP with either L-glutamine or ammonia as the source of nitrogen. Regulates intracellular CTP levels through interactions with the four ribonucleotide triphosphates.</text>
</comment>
<comment type="catalytic activity">
    <reaction evidence="1">
        <text>UTP + L-glutamine + ATP + H2O = CTP + L-glutamate + ADP + phosphate + 2 H(+)</text>
        <dbReference type="Rhea" id="RHEA:26426"/>
        <dbReference type="ChEBI" id="CHEBI:15377"/>
        <dbReference type="ChEBI" id="CHEBI:15378"/>
        <dbReference type="ChEBI" id="CHEBI:29985"/>
        <dbReference type="ChEBI" id="CHEBI:30616"/>
        <dbReference type="ChEBI" id="CHEBI:37563"/>
        <dbReference type="ChEBI" id="CHEBI:43474"/>
        <dbReference type="ChEBI" id="CHEBI:46398"/>
        <dbReference type="ChEBI" id="CHEBI:58359"/>
        <dbReference type="ChEBI" id="CHEBI:456216"/>
        <dbReference type="EC" id="6.3.4.2"/>
    </reaction>
</comment>
<comment type="catalytic activity">
    <reaction evidence="1">
        <text>L-glutamine + H2O = L-glutamate + NH4(+)</text>
        <dbReference type="Rhea" id="RHEA:15889"/>
        <dbReference type="ChEBI" id="CHEBI:15377"/>
        <dbReference type="ChEBI" id="CHEBI:28938"/>
        <dbReference type="ChEBI" id="CHEBI:29985"/>
        <dbReference type="ChEBI" id="CHEBI:58359"/>
    </reaction>
</comment>
<comment type="catalytic activity">
    <reaction evidence="1">
        <text>UTP + NH4(+) + ATP = CTP + ADP + phosphate + 2 H(+)</text>
        <dbReference type="Rhea" id="RHEA:16597"/>
        <dbReference type="ChEBI" id="CHEBI:15378"/>
        <dbReference type="ChEBI" id="CHEBI:28938"/>
        <dbReference type="ChEBI" id="CHEBI:30616"/>
        <dbReference type="ChEBI" id="CHEBI:37563"/>
        <dbReference type="ChEBI" id="CHEBI:43474"/>
        <dbReference type="ChEBI" id="CHEBI:46398"/>
        <dbReference type="ChEBI" id="CHEBI:456216"/>
    </reaction>
</comment>
<comment type="activity regulation">
    <text evidence="1">Allosterically activated by GTP, when glutamine is the substrate; GTP has no effect on the reaction when ammonia is the substrate. The allosteric effector GTP functions by stabilizing the protein conformation that binds the tetrahedral intermediate(s) formed during glutamine hydrolysis. Inhibited by the product CTP, via allosteric rather than competitive inhibition.</text>
</comment>
<comment type="pathway">
    <text evidence="1">Pyrimidine metabolism; CTP biosynthesis via de novo pathway; CTP from UDP: step 2/2.</text>
</comment>
<comment type="subunit">
    <text evidence="1">Homotetramer.</text>
</comment>
<comment type="miscellaneous">
    <text evidence="1">CTPSs have evolved a hybrid strategy for distinguishing between UTP and CTP. The overlapping regions of the product feedback inhibitory and substrate sites recognize a common feature in both compounds, the triphosphate moiety. To differentiate isosteric substrate and product pyrimidine rings, an additional pocket far from the expected kinase/ligase catalytic site, specifically recognizes the cytosine and ribose portions of the product inhibitor.</text>
</comment>
<comment type="similarity">
    <text evidence="1">Belongs to the CTP synthase family.</text>
</comment>